<dbReference type="EMBL" id="DQ137141">
    <property type="protein sequence ID" value="AAQ82548.1"/>
    <property type="molecule type" value="Genomic_DNA"/>
</dbReference>
<dbReference type="TCDB" id="9.A.45.1.1">
    <property type="family name" value="the archaeocin/halocin c8 (halc8) family"/>
</dbReference>
<dbReference type="GO" id="GO:0005576">
    <property type="term" value="C:extracellular region"/>
    <property type="evidence" value="ECO:0000314"/>
    <property type="project" value="UniProtKB"/>
</dbReference>
<dbReference type="GO" id="GO:0005886">
    <property type="term" value="C:plasma membrane"/>
    <property type="evidence" value="ECO:0007669"/>
    <property type="project" value="UniProtKB-SubCell"/>
</dbReference>
<dbReference type="GO" id="GO:0042742">
    <property type="term" value="P:defense response to bacterium"/>
    <property type="evidence" value="ECO:0000314"/>
    <property type="project" value="UniProtKB"/>
</dbReference>
<dbReference type="GO" id="GO:0031640">
    <property type="term" value="P:killing of cells of another organism"/>
    <property type="evidence" value="ECO:0007669"/>
    <property type="project" value="UniProtKB-KW"/>
</dbReference>
<dbReference type="InterPro" id="IPR055022">
    <property type="entry name" value="Hac8-like_N"/>
</dbReference>
<dbReference type="InterPro" id="IPR031033">
    <property type="entry name" value="Halocin_C8_dom"/>
</dbReference>
<dbReference type="InterPro" id="IPR006311">
    <property type="entry name" value="TAT_signal"/>
</dbReference>
<dbReference type="NCBIfam" id="TIGR04449">
    <property type="entry name" value="halocin_C8_dom"/>
    <property type="match status" value="1"/>
</dbReference>
<dbReference type="Pfam" id="PF22862">
    <property type="entry name" value="Hac8_like_N"/>
    <property type="match status" value="1"/>
</dbReference>
<dbReference type="PROSITE" id="PS51318">
    <property type="entry name" value="TAT"/>
    <property type="match status" value="1"/>
</dbReference>
<keyword id="KW-0044">Antibiotic</keyword>
<keyword id="KW-0929">Antimicrobial</keyword>
<keyword id="KW-0078">Bacteriocin</keyword>
<keyword id="KW-1003">Cell membrane</keyword>
<keyword id="KW-0903">Direct protein sequencing</keyword>
<keyword id="KW-0472">Membrane</keyword>
<keyword id="KW-0964">Secreted</keyword>
<keyword id="KW-0732">Signal</keyword>
<comment type="function">
    <molecule>Halocin-C8</molecule>
    <text evidence="2">Has antibacterial activity against a wide variety of haloarchaeons. Causes cell lysis and death, possibly by disrupting the cell wall (PubMed:12811620).</text>
</comment>
<comment type="function">
    <molecule>Immunity protein HalI</molecule>
    <text evidence="3 4">Acts as an immunity protein for halocin-C8. Able to block the halocin-C8 activity by sequestering the activity of halocin-C8 through specific and direct binding (PubMed:15978083, PubMed:18658263).</text>
</comment>
<comment type="subunit">
    <text evidence="4">Immunity protein HalI interacts with Halocin-C8; the interaction is direct.</text>
</comment>
<comment type="subcellular location">
    <molecule>Halocin-C8</molecule>
    <subcellularLocation>
        <location>Secreted</location>
    </subcellularLocation>
    <text evidence="2 3">Secreted (PubMed:12811620, PubMed:15978083).</text>
</comment>
<comment type="subcellular location">
    <molecule>Immunity protein HalI</molecule>
    <subcellularLocation>
        <location>Cell membrane</location>
    </subcellularLocation>
    <text evidence="3">Exclusively localizes to the cell membrane.</text>
</comment>
<comment type="induction">
    <text evidence="3">Increases to maximal levels upon transition from exponential to stationary phase.</text>
</comment>
<comment type="domain">
    <text evidence="4">The helix-loop-helix (HLH) region is essential for immunity function of Immunity protein HalI and interaction with Halocin-C8.</text>
</comment>
<comment type="PTM">
    <text evidence="1 3">Predicted to be exported by the Tat system. The position of the signal peptide cleavage has not been experimentally proven.</text>
</comment>
<comment type="mass spectrometry" mass="7427.1" method="MALDI" evidence="3">
    <molecule>Halocin-C8</molecule>
</comment>
<comment type="miscellaneous">
    <molecule>Halocin-C8</molecule>
    <text evidence="5">Is quite robust, as it can be desalted, boiled, subjected to organic solvents, and stored at 4 degrees Celsius for extended periods without losing activity.</text>
</comment>
<accession>P83716</accession>
<accession>Q6JSL9</accession>
<organism>
    <name type="scientific">Halobacterium sp. (strain AS7092)</name>
    <dbReference type="NCBI Taxonomy" id="245739"/>
    <lineage>
        <taxon>Archaea</taxon>
        <taxon>Methanobacteriati</taxon>
        <taxon>Methanobacteriota</taxon>
        <taxon>Stenosarchaea group</taxon>
        <taxon>Halobacteria</taxon>
        <taxon>Halobacteriales</taxon>
        <taxon>Halobacteriaceae</taxon>
        <taxon>Halobacterium</taxon>
    </lineage>
</organism>
<name>HAC8_HALAS</name>
<sequence length="283" mass="29379">MKEDNNTSEESGRINRRNVLKTVGAAGLFAAGSTGMAAAADSLSQAEEPKLLTGTEKRTLARELAKTPAFRELAQRARADGAQIRSDADSIVAGYARGEDFAREVVQYDLENLTDAAEASIVIGRNPETGEIEVANLDYYYETDDGVLDEVHRFEPTNASETDGVQSAATSDGATVIAVDTDAIREAQNSEIDVDESSPSNAAPTPADIDITGCSACKYAAGQVCTIGCSAAGGFICGLLGITIPVAGLSCLGFVEIVCTVADEYSGCGDAVAKEACNRAGLC</sequence>
<reference key="1">
    <citation type="journal article" date="2005" name="Mol. Microbiol.">
        <title>A single gene directs both production and immunity of halocin C8 in a haloarchaeal strain AS7092.</title>
        <authorList>
            <person name="Sun C."/>
            <person name="Li Y."/>
            <person name="Mei S."/>
            <person name="Lu Q."/>
            <person name="Zhou L."/>
            <person name="Xiang H."/>
        </authorList>
    </citation>
    <scope>NUCLEOTIDE SEQUENCE [GENOMIC DNA]</scope>
    <scope>MASS SPECTROMETRY</scope>
    <scope>INDUCTION</scope>
    <scope>PROTEOLYTIC PROCESSING</scope>
    <source>
        <strain>AS7092</strain>
    </source>
</reference>
<reference key="2">
    <citation type="journal article" date="2003" name="Extremophiles">
        <title>Purification and biological characterization of halocin C8, a novel peptide antibiotic from Halobacterium strain AS7092.</title>
        <authorList>
            <person name="Li Y."/>
            <person name="Xiang H."/>
            <person name="Liu J."/>
            <person name="Zhou M."/>
            <person name="Tan H."/>
        </authorList>
    </citation>
    <scope>PROTEIN SEQUENCE OF 208-222</scope>
    <scope>SUBCELLULAR LOCATION</scope>
    <source>
        <strain>AS7092</strain>
    </source>
</reference>
<reference key="3">
    <citation type="journal article" date="2008" name="J. Bacteriol.">
        <title>The helix-loop-helix motif at the N terminus of HalI is essential for its immunity function against halocin C8.</title>
        <authorList>
            <person name="Mei S."/>
            <person name="Sun C."/>
            <person name="Liu X."/>
            <person name="Lu Q."/>
            <person name="Cai L."/>
            <person name="Li Y."/>
            <person name="Xiang H."/>
        </authorList>
    </citation>
    <scope>SUBUNIT</scope>
    <scope>MUTAGENESIS OF ALA-61; ARG-62; GLU-63; LEU-64; ALA-65; LYS-66; THR-67; PRO-68; ALA-69; PHE-70; ARG-71; GLU-72; LEU-73; ALA-74 AND GLN-75</scope>
    <source>
        <strain>AS7092</strain>
    </source>
</reference>
<proteinExistence type="evidence at protein level"/>
<protein>
    <recommendedName>
        <fullName>Pre-protein-C8</fullName>
    </recommendedName>
    <component>
        <recommendedName>
            <fullName>Immunity protein HalI</fullName>
        </recommendedName>
    </component>
    <component>
        <recommendedName>
            <fullName>Halocin-C8</fullName>
            <shortName>HalC8</shortName>
        </recommendedName>
    </component>
</protein>
<feature type="signal peptide" description="Tat-type signal" evidence="1">
    <location>
        <begin position="1"/>
        <end position="40"/>
    </location>
</feature>
<feature type="chain" id="PRO_0000429048" description="Immunity protein HalI">
    <location>
        <begin position="41"/>
        <end position="207"/>
    </location>
</feature>
<feature type="chain" id="PRO_0000195165" description="Halocin-C8">
    <location>
        <begin position="208"/>
        <end position="283"/>
    </location>
</feature>
<feature type="region of interest" description="Helix-loop-helix (HLH) region">
    <location>
        <begin position="61"/>
        <end position="75"/>
    </location>
</feature>
<feature type="mutagenesis site" description="No effect on immunity function of Immunity protein HalI and interaction with Halocin-C8." evidence="4">
    <original>A</original>
    <variation>D</variation>
    <location>
        <position position="61"/>
    </location>
</feature>
<feature type="mutagenesis site" description="Slightly decreased immunity function of Immunity protein HalI and interaction with Halocin-C8." evidence="4">
    <original>R</original>
    <variation>A</variation>
    <location>
        <position position="62"/>
    </location>
</feature>
<feature type="mutagenesis site" description="Slightly decreased immunity function of Immunity protein HalI and interaction with Halocin-C8." evidence="4">
    <original>E</original>
    <variation>A</variation>
    <location>
        <position position="63"/>
    </location>
</feature>
<feature type="mutagenesis site" description="Impaired immunity function of Immunity protein HalI and interaction with Halocin-C8." evidence="4">
    <original>L</original>
    <variation>A</variation>
    <location>
        <position position="64"/>
    </location>
</feature>
<feature type="mutagenesis site" description="No effect on immunity function of Immunity protein HalI and interaction with Halocin-C8." evidence="4">
    <original>A</original>
    <variation>P</variation>
    <location>
        <position position="65"/>
    </location>
</feature>
<feature type="mutagenesis site" description="No effect on immunity function of Immunity protein HalI and interaction with Halocin-C8." evidence="4">
    <original>K</original>
    <variation>P</variation>
    <location>
        <position position="66"/>
    </location>
</feature>
<feature type="mutagenesis site" description="No effect on immunity function of Immunity protein HalI and interaction with Halocin-C8." evidence="4">
    <original>T</original>
    <variation>A</variation>
    <location>
        <position position="67"/>
    </location>
</feature>
<feature type="mutagenesis site" description="No effect on immunity function of Immunity protein HalI and interaction with Halocin-C8." evidence="4">
    <original>P</original>
    <variation>A</variation>
    <location>
        <position position="68"/>
    </location>
</feature>
<feature type="mutagenesis site" description="No effect on immunity function of Immunity protein HalI and interaction with Halocin-C8." evidence="4">
    <original>A</original>
    <variation>V</variation>
    <location>
        <position position="69"/>
    </location>
</feature>
<feature type="mutagenesis site" description="No effect on immunity function of Immunity protein HalI and interaction with Halocin-C8." evidence="4">
    <original>F</original>
    <variation>A</variation>
    <location>
        <position position="70"/>
    </location>
</feature>
<feature type="mutagenesis site" description="No effect on immunity function of Immunity protein HalI and interaction with Halocin-C8." evidence="4">
    <original>R</original>
    <variation>A</variation>
    <location>
        <position position="71"/>
    </location>
</feature>
<feature type="mutagenesis site" description="No effect on immunity function of Immunity protein HalI and interaction with Halocin-C8." evidence="4">
    <original>E</original>
    <variation>A</variation>
    <location>
        <position position="72"/>
    </location>
</feature>
<feature type="mutagenesis site" description="Impaired immunity function of Immunity protein HalI and interaction with Halocin-C8." evidence="4">
    <original>L</original>
    <variation>A</variation>
    <location>
        <position position="73"/>
    </location>
</feature>
<feature type="mutagenesis site" description="No effect on immunity function of Immunity protein HalI and interaction with Halocin-C8." evidence="4">
    <original>A</original>
    <variation>V</variation>
    <location>
        <position position="74"/>
    </location>
</feature>
<feature type="mutagenesis site" description="No effect on immunity function of Immunity protein HalI and interaction with Halocin-C8." evidence="4">
    <original>Q</original>
    <variation>A</variation>
    <location>
        <position position="75"/>
    </location>
</feature>
<gene>
    <name type="primary">proC8</name>
</gene>
<evidence type="ECO:0000255" key="1">
    <source>
        <dbReference type="PROSITE-ProRule" id="PRU00648"/>
    </source>
</evidence>
<evidence type="ECO:0000269" key="2">
    <source>
    </source>
</evidence>
<evidence type="ECO:0000269" key="3">
    <source>
    </source>
</evidence>
<evidence type="ECO:0000269" key="4">
    <source>
    </source>
</evidence>
<evidence type="ECO:0000305" key="5">
    <source>
    </source>
</evidence>